<evidence type="ECO:0000305" key="1"/>
<feature type="chain" id="PRO_0000325827" description="UPF0538 protein C2orf76 homolog">
    <location>
        <begin position="1"/>
        <end position="126"/>
    </location>
</feature>
<name>CB076_DANRE</name>
<comment type="similarity">
    <text evidence="1">Belongs to the UPF0538 family.</text>
</comment>
<gene>
    <name type="ORF">zgc:101851</name>
</gene>
<protein>
    <recommendedName>
        <fullName>UPF0538 protein C2orf76 homolog</fullName>
    </recommendedName>
</protein>
<keyword id="KW-1185">Reference proteome</keyword>
<dbReference type="EMBL" id="BC081413">
    <property type="protein sequence ID" value="AAH81413.1"/>
    <property type="molecule type" value="mRNA"/>
</dbReference>
<dbReference type="RefSeq" id="NP_001004675.1">
    <property type="nucleotide sequence ID" value="NM_001004675.1"/>
</dbReference>
<dbReference type="FunCoup" id="Q66IB8">
    <property type="interactions" value="76"/>
</dbReference>
<dbReference type="STRING" id="7955.ENSDARP00000117605"/>
<dbReference type="PaxDb" id="7955-ENSDARP00000117605"/>
<dbReference type="GeneID" id="447937"/>
<dbReference type="KEGG" id="dre:447937"/>
<dbReference type="AGR" id="ZFIN:ZDB-GENE-040912-123"/>
<dbReference type="ZFIN" id="ZDB-GENE-040912-123">
    <property type="gene designation" value="zgc:101851"/>
</dbReference>
<dbReference type="eggNOG" id="KOG4147">
    <property type="taxonomic scope" value="Eukaryota"/>
</dbReference>
<dbReference type="InParanoid" id="Q66IB8"/>
<dbReference type="OrthoDB" id="937at2759"/>
<dbReference type="PhylomeDB" id="Q66IB8"/>
<dbReference type="PRO" id="PR:Q66IB8"/>
<dbReference type="Proteomes" id="UP000000437">
    <property type="component" value="Chromosome 9"/>
</dbReference>
<dbReference type="InterPro" id="IPR018794">
    <property type="entry name" value="UPF0538"/>
</dbReference>
<dbReference type="PANTHER" id="PTHR18444">
    <property type="entry name" value="UPF0538 FAMILY MEMBER"/>
    <property type="match status" value="1"/>
</dbReference>
<dbReference type="PANTHER" id="PTHR18444:SF9">
    <property type="entry name" value="UPF0538 PROTEIN C2ORF76"/>
    <property type="match status" value="1"/>
</dbReference>
<dbReference type="Pfam" id="PF10209">
    <property type="entry name" value="DUF2340"/>
    <property type="match status" value="1"/>
</dbReference>
<reference key="1">
    <citation type="submission" date="2004-09" db="EMBL/GenBank/DDBJ databases">
        <authorList>
            <consortium name="NIH - Zebrafish Gene Collection (ZGC) project"/>
        </authorList>
    </citation>
    <scope>NUCLEOTIDE SEQUENCE [LARGE SCALE MRNA]</scope>
    <source>
        <tissue>Larva</tissue>
    </source>
</reference>
<proteinExistence type="evidence at transcript level"/>
<sequence length="126" mass="14694">MMCDRAVLTVRLVRSFEHRNFKPLVFKDVNLDQTVDEFISFVKQDISVRAGLPPPFRKFDYDTLKIIHQAHGAKTNELVMSLEDDEKLILREGCRLRACGVANETELAFFKMTDYIKFKADPHSEW</sequence>
<organism>
    <name type="scientific">Danio rerio</name>
    <name type="common">Zebrafish</name>
    <name type="synonym">Brachydanio rerio</name>
    <dbReference type="NCBI Taxonomy" id="7955"/>
    <lineage>
        <taxon>Eukaryota</taxon>
        <taxon>Metazoa</taxon>
        <taxon>Chordata</taxon>
        <taxon>Craniata</taxon>
        <taxon>Vertebrata</taxon>
        <taxon>Euteleostomi</taxon>
        <taxon>Actinopterygii</taxon>
        <taxon>Neopterygii</taxon>
        <taxon>Teleostei</taxon>
        <taxon>Ostariophysi</taxon>
        <taxon>Cypriniformes</taxon>
        <taxon>Danionidae</taxon>
        <taxon>Danioninae</taxon>
        <taxon>Danio</taxon>
    </lineage>
</organism>
<accession>Q66IB8</accession>